<name>VP91_NPVOP</name>
<dbReference type="EMBL" id="U75930">
    <property type="protein sequence ID" value="AAC59085.1"/>
    <property type="molecule type" value="Genomic_DNA"/>
</dbReference>
<dbReference type="RefSeq" id="NP_046242.1">
    <property type="nucleotide sequence ID" value="NC_001875.2"/>
</dbReference>
<dbReference type="CAZy" id="CBM14">
    <property type="family name" value="Carbohydrate-Binding Module Family 14"/>
</dbReference>
<dbReference type="GlyCosmos" id="O10336">
    <property type="glycosylation" value="4 sites, No reported glycans"/>
</dbReference>
<dbReference type="KEGG" id="vg:912002"/>
<dbReference type="OrthoDB" id="542at10239"/>
<dbReference type="Proteomes" id="UP000009248">
    <property type="component" value="Genome"/>
</dbReference>
<dbReference type="GO" id="GO:0005576">
    <property type="term" value="C:extracellular region"/>
    <property type="evidence" value="ECO:0007669"/>
    <property type="project" value="InterPro"/>
</dbReference>
<dbReference type="GO" id="GO:0044423">
    <property type="term" value="C:virion component"/>
    <property type="evidence" value="ECO:0007669"/>
    <property type="project" value="UniProtKB-KW"/>
</dbReference>
<dbReference type="GO" id="GO:0008061">
    <property type="term" value="F:chitin binding"/>
    <property type="evidence" value="ECO:0007669"/>
    <property type="project" value="UniProtKB-KW"/>
</dbReference>
<dbReference type="GO" id="GO:0008270">
    <property type="term" value="F:zinc ion binding"/>
    <property type="evidence" value="ECO:0007669"/>
    <property type="project" value="UniProtKB-KW"/>
</dbReference>
<dbReference type="InterPro" id="IPR013682">
    <property type="entry name" value="BaculoV_Vp91_N"/>
</dbReference>
<dbReference type="InterPro" id="IPR002557">
    <property type="entry name" value="Chitin-bd_dom"/>
</dbReference>
<dbReference type="InterPro" id="IPR036508">
    <property type="entry name" value="Chitin-bd_dom_sf"/>
</dbReference>
<dbReference type="Pfam" id="PF08475">
    <property type="entry name" value="Baculo_VP91_N"/>
    <property type="match status" value="1"/>
</dbReference>
<dbReference type="Pfam" id="PF01607">
    <property type="entry name" value="CBM_14"/>
    <property type="match status" value="1"/>
</dbReference>
<dbReference type="SMART" id="SM00494">
    <property type="entry name" value="ChtBD2"/>
    <property type="match status" value="1"/>
</dbReference>
<dbReference type="SUPFAM" id="SSF57625">
    <property type="entry name" value="Invertebrate chitin-binding proteins"/>
    <property type="match status" value="1"/>
</dbReference>
<dbReference type="PROSITE" id="PS50940">
    <property type="entry name" value="CHIT_BIND_II"/>
    <property type="match status" value="1"/>
</dbReference>
<dbReference type="PROSITE" id="PS51807">
    <property type="entry name" value="ZF_C2HC_BV"/>
    <property type="match status" value="1"/>
</dbReference>
<reference key="1">
    <citation type="journal article" date="1997" name="Virology">
        <title>The sequence of the Orgyia pseudotsugata multinucleocapsid nuclear polyhedrosis virus genome.</title>
        <authorList>
            <person name="Ahrens C.H."/>
            <person name="Russell R.R."/>
            <person name="Funk C.J."/>
            <person name="Evans J."/>
            <person name="Harwood S."/>
            <person name="Rohrmann G.F."/>
        </authorList>
    </citation>
    <scope>NUCLEOTIDE SEQUENCE [LARGE SCALE GENOMIC DNA]</scope>
</reference>
<reference key="2">
    <citation type="journal article" date="1997" name="Virology">
        <title>Characterization of P91, a protein associated with virions of an Orgyia pseudotsugata baculovirus.</title>
        <authorList>
            <person name="Russell R.L.Q."/>
            <person name="Rohrmann G.F."/>
        </authorList>
    </citation>
    <scope>SUBCELLULAR LOCATION</scope>
</reference>
<feature type="signal peptide" evidence="1">
    <location>
        <begin position="1"/>
        <end position="18"/>
    </location>
</feature>
<feature type="chain" id="PRO_0000036752" description="Capsid-associated protein Vp91">
    <location>
        <begin position="19"/>
        <end position="819"/>
    </location>
</feature>
<feature type="domain" description="Chitin-binding type-2" evidence="2">
    <location>
        <begin position="223"/>
        <end position="281"/>
    </location>
</feature>
<feature type="zinc finger region" description="C2HC BV-type" evidence="3">
    <location>
        <begin position="147"/>
        <end position="196"/>
    </location>
</feature>
<feature type="region of interest" description="Disordered" evidence="4">
    <location>
        <begin position="650"/>
        <end position="671"/>
    </location>
</feature>
<feature type="compositionally biased region" description="Pro residues" evidence="4">
    <location>
        <begin position="658"/>
        <end position="671"/>
    </location>
</feature>
<feature type="glycosylation site" description="N-linked (GlcNAc...) asparagine; by host" evidence="1">
    <location>
        <position position="210"/>
    </location>
</feature>
<feature type="glycosylation site" description="N-linked (GlcNAc...) asparagine; by host" evidence="1">
    <location>
        <position position="588"/>
    </location>
</feature>
<feature type="glycosylation site" description="N-linked (GlcNAc...) asparagine; by host" evidence="1">
    <location>
        <position position="609"/>
    </location>
</feature>
<feature type="glycosylation site" description="N-linked (GlcNAc...) asparagine; by host" evidence="1">
    <location>
        <position position="752"/>
    </location>
</feature>
<feature type="disulfide bond" evidence="2">
    <location>
        <begin position="207"/>
        <end position="220"/>
    </location>
</feature>
<feature type="disulfide bond" evidence="2">
    <location>
        <begin position="260"/>
        <end position="273"/>
    </location>
</feature>
<keyword id="KW-0147">Chitin-binding</keyword>
<keyword id="KW-1015">Disulfide bond</keyword>
<keyword id="KW-0325">Glycoprotein</keyword>
<keyword id="KW-0479">Metal-binding</keyword>
<keyword id="KW-1185">Reference proteome</keyword>
<keyword id="KW-0677">Repeat</keyword>
<keyword id="KW-0732">Signal</keyword>
<keyword id="KW-0946">Virion</keyword>
<keyword id="KW-0862">Zinc</keyword>
<keyword id="KW-0863">Zinc-finger</keyword>
<gene>
    <name type="primary">p91</name>
    <name type="ORF">ORF86</name>
</gene>
<organismHost>
    <name type="scientific">Orgyia pseudotsugata</name>
    <name type="common">Douglas-fir tussock moth</name>
    <dbReference type="NCBI Taxonomy" id="33414"/>
</organismHost>
<proteinExistence type="inferred from homology"/>
<comment type="function">
    <text>Probable capsid-associated protein.</text>
</comment>
<comment type="subcellular location">
    <subcellularLocation>
        <location evidence="5">Virion</location>
    </subcellularLocation>
    <text>In virions, associates with the capsid and maybe also with the envelope surrounding the capsid.</text>
</comment>
<organism>
    <name type="scientific">Orgyia pseudotsugata multicapsid polyhedrosis virus</name>
    <name type="common">OpMNPV</name>
    <dbReference type="NCBI Taxonomy" id="262177"/>
    <lineage>
        <taxon>Viruses</taxon>
        <taxon>Viruses incertae sedis</taxon>
        <taxon>Naldaviricetes</taxon>
        <taxon>Lefavirales</taxon>
        <taxon>Baculoviridae</taxon>
        <taxon>Alphabaculovirus</taxon>
        <taxon>Alphabaculovirus orpseudotsugatae</taxon>
    </lineage>
</organism>
<accession>O10336</accession>
<protein>
    <recommendedName>
        <fullName>Capsid-associated protein Vp91</fullName>
    </recommendedName>
</protein>
<evidence type="ECO:0000255" key="1"/>
<evidence type="ECO:0000255" key="2">
    <source>
        <dbReference type="PROSITE-ProRule" id="PRU00144"/>
    </source>
</evidence>
<evidence type="ECO:0000255" key="3">
    <source>
        <dbReference type="PROSITE-ProRule" id="PRU01148"/>
    </source>
</evidence>
<evidence type="ECO:0000256" key="4">
    <source>
        <dbReference type="SAM" id="MobiDB-lite"/>
    </source>
</evidence>
<evidence type="ECO:0000269" key="5">
    <source>
    </source>
</evidence>
<sequence length="819" mass="91067">MSDVVLLVLAIILITIFTLIYYTIFFEFDETTFSKRLQVLTEYAKRTNADKPTPDVLGHVSDVYDHTYIVSWFKTDDLSTYHETVHDDTVEVFDFLEQRFAAAAAAVAHRVAPLAAEPDAFVVTGDAGDVKLRCPQHFRFDYDQLKCVPVDPCAGRAPGRYPMDERLLDTLVHNQPSDKDYSAGEHLHHPTLYLRCLADGSHAVRECPDNYTFDAASGECRVNELCEGRPDGFVLAYFPETLRVNEFVECRGGKHVVARCPDQQVFDRALMTCVQTHPCAFNGAGHTYITADIGDAQFFKCLNDREAQLITCINRVRGADGQYACSGDARCADLPDGTGRLMHTHTDDTFEYVSGQTICDNYNVISEIECDTGNVLENKLFVNKFTLGAQFPREVLDAGVCAPATLNNVRVLSDAFPVENLPNDYKVDMQTSVVGLATMMADLTTGADPDTAFGQNVLLAREVDAVGLSPLTAESIDCFGARLFDVMDARRANVCTESGGDLLRTIEFGDGAFLSVFRDDLTGSDADYKQFCAISYESPLKIVNSDHFERRILANILQADICAELYTTIYQKYTTLARKYTTASPKYNYTFVKRPPNIVVYAENTHLKNSTISVPTFDPFAPQPADNKIGPTNALFDPFADRVWRSEPGGDGDHWAPEAPPTQPEAPPAPEPSPLILDKKELFYSCYYELPTFKLTSCHAENDVIIDALQQLRAAVEVDPGCEPAKDLHFVLNAYAYMGNGVGCRSVFDGNNVTVIKEPVPTYTFNNLQTQSDDGVRYNKHVHVKDGRYMACPEHLYDGAAFACNAEPDKLYYLDNMQK</sequence>